<gene>
    <name evidence="2" type="primary">RIGI</name>
    <name type="synonym">DDX58</name>
</gene>
<evidence type="ECO:0000250" key="1"/>
<evidence type="ECO:0000250" key="2">
    <source>
        <dbReference type="UniProtKB" id="O95786"/>
    </source>
</evidence>
<evidence type="ECO:0000250" key="3">
    <source>
        <dbReference type="UniProtKB" id="Q6Q899"/>
    </source>
</evidence>
<evidence type="ECO:0000255" key="4">
    <source>
        <dbReference type="PROSITE-ProRule" id="PRU00541"/>
    </source>
</evidence>
<evidence type="ECO:0000255" key="5">
    <source>
        <dbReference type="PROSITE-ProRule" id="PRU00542"/>
    </source>
</evidence>
<evidence type="ECO:0000255" key="6">
    <source>
        <dbReference type="PROSITE-ProRule" id="PRU01125"/>
    </source>
</evidence>
<evidence type="ECO:0000269" key="7">
    <source>
    </source>
</evidence>
<evidence type="ECO:0000305" key="8"/>
<proteinExistence type="evidence at transcript level"/>
<protein>
    <recommendedName>
        <fullName evidence="2">Antiviral innate immune response receptor RIG-I</fullName>
    </recommendedName>
    <alternativeName>
        <fullName evidence="2">ATP-dependent RNA helicase DDX58</fullName>
        <ecNumber evidence="2">3.6.4.13</ecNumber>
    </alternativeName>
    <alternativeName>
        <fullName>DEAD box protein 58</fullName>
    </alternativeName>
    <alternativeName>
        <fullName>RHIV-1</fullName>
    </alternativeName>
    <alternativeName>
        <fullName>RIG-I-like receptor 1</fullName>
        <shortName>RLR-1</shortName>
    </alternativeName>
    <alternativeName>
        <fullName>RNA helicase induced by virus</fullName>
    </alternativeName>
    <alternativeName>
        <fullName>Retinoic acid-inducible gene 1 protein</fullName>
        <shortName>RIG-1</shortName>
    </alternativeName>
    <alternativeName>
        <fullName>Retinoic acid-inducible gene I protein</fullName>
        <shortName>RIG-I</shortName>
    </alternativeName>
</protein>
<name>RIGI_PIG</name>
<accession>Q9GLV6</accession>
<keyword id="KW-0007">Acetylation</keyword>
<keyword id="KW-0051">Antiviral defense</keyword>
<keyword id="KW-0067">ATP-binding</keyword>
<keyword id="KW-0965">Cell junction</keyword>
<keyword id="KW-1003">Cell membrane</keyword>
<keyword id="KW-0966">Cell projection</keyword>
<keyword id="KW-0963">Cytoplasm</keyword>
<keyword id="KW-0206">Cytoskeleton</keyword>
<keyword id="KW-0347">Helicase</keyword>
<keyword id="KW-0378">Hydrolase</keyword>
<keyword id="KW-0391">Immunity</keyword>
<keyword id="KW-0399">Innate immunity</keyword>
<keyword id="KW-1017">Isopeptide bond</keyword>
<keyword id="KW-0472">Membrane</keyword>
<keyword id="KW-0479">Metal-binding</keyword>
<keyword id="KW-0547">Nucleotide-binding</keyword>
<keyword id="KW-0597">Phosphoprotein</keyword>
<keyword id="KW-1185">Reference proteome</keyword>
<keyword id="KW-0677">Repeat</keyword>
<keyword id="KW-0694">RNA-binding</keyword>
<keyword id="KW-0796">Tight junction</keyword>
<keyword id="KW-0832">Ubl conjugation</keyword>
<keyword id="KW-0862">Zinc</keyword>
<organism>
    <name type="scientific">Sus scrofa</name>
    <name type="common">Pig</name>
    <dbReference type="NCBI Taxonomy" id="9823"/>
    <lineage>
        <taxon>Eukaryota</taxon>
        <taxon>Metazoa</taxon>
        <taxon>Chordata</taxon>
        <taxon>Craniata</taxon>
        <taxon>Vertebrata</taxon>
        <taxon>Euteleostomi</taxon>
        <taxon>Mammalia</taxon>
        <taxon>Eutheria</taxon>
        <taxon>Laurasiatheria</taxon>
        <taxon>Artiodactyla</taxon>
        <taxon>Suina</taxon>
        <taxon>Suidae</taxon>
        <taxon>Sus</taxon>
    </lineage>
</organism>
<sequence length="940" mass="107584">MTAEQRRNLHAFGDYVRKTLDPTFILSYMAPWFRDDEVQHIQAEKNNKGPTEAASLFLQFLLELQEEGWFRGFLDALNQAGYCGLCEAIESWDFQKIEKLEEYRSLLRRLQPEFKTTINPKDILPEIAECLISQECEEILQICSSKGLMAGAEKMVECLLRSDKENWPKTLKLALEKEESRFSELWMVDKGAEDVKMKDLEDDEMKTCDVQIFYKEEPENQNLSQNSCSSSAPHTYSPLKPRKYQLELALPAQNGKNTIICAPTGCGKTFVSLLICEHHLKKFPRGRKGKVVFFAIQLPVYEQQKSVFSKHFERLGYKVAGISGATSDTVCVEQIVENSDIIILTPQILVNCLTNGTIPSLSVFTLMIFDECHNTSKQHPYNVIMFSYLDRKLGGSSDSLPQVIGLTASVGVGDAKNKAEATEYICKLCASLDTSVIATVRDNLEELEEVVYKPQKFFRKVELRTTDRFKCIISQLMMEIESLAKSIFEELGTITLGGLFQIQNSNFGTQKYEQWIVKVQKECAVFQMPDKDKESRICKALFSYMSHLRIYNDALIINEHARMKDALDYLKDFFRNIRAAGFDEIEQDLTQRFEEKLQELESISIDPSNENPKLRDLCFILQEEYHLNPETRTILFVKTRALVDALKKWIKENPKLSFLKPSILTGRGKTNQNIGMTLPAQKCVLDTFRTDKDNKILITTSVADEGIDIAQCNLVILYEYVGNVIKMIQTRGRGRARGSKCFLLTANADLIDKEKMNMYKEEMMNGAILILQTWDEAVFKEKIHQIQIREKIIRDNQGKPEPVPDKKTKKLLCKKCKAFACYTADIRMVEKCHFTVVGDAFRERFVSKLHPKPKSFGNIEKRAKIYCARPDCSHDWGIYVRYKAFEMPFIKIESFVVEDIATGVQTVHAKWKDFNFEKLSFDAAEMAGGAQDLGLQGMGN</sequence>
<dbReference type="EC" id="3.6.4.13" evidence="2"/>
<dbReference type="EMBL" id="AF181119">
    <property type="protein sequence ID" value="AAG09428.1"/>
    <property type="molecule type" value="mRNA"/>
</dbReference>
<dbReference type="SMR" id="Q9GLV6"/>
<dbReference type="FunCoup" id="Q9GLV6">
    <property type="interactions" value="266"/>
</dbReference>
<dbReference type="IntAct" id="Q9GLV6">
    <property type="interactions" value="1"/>
</dbReference>
<dbReference type="STRING" id="9823.ENSSSCP00000045260"/>
<dbReference type="GlyGen" id="Q9GLV6">
    <property type="glycosylation" value="1 site"/>
</dbReference>
<dbReference type="PaxDb" id="9823-ENSSSCP00000023307"/>
<dbReference type="PeptideAtlas" id="Q9GLV6"/>
<dbReference type="eggNOG" id="KOG0354">
    <property type="taxonomic scope" value="Eukaryota"/>
</dbReference>
<dbReference type="InParanoid" id="Q9GLV6"/>
<dbReference type="Proteomes" id="UP000008227">
    <property type="component" value="Unplaced"/>
</dbReference>
<dbReference type="Proteomes" id="UP000314985">
    <property type="component" value="Unplaced"/>
</dbReference>
<dbReference type="Proteomes" id="UP000694570">
    <property type="component" value="Unplaced"/>
</dbReference>
<dbReference type="Proteomes" id="UP000694571">
    <property type="component" value="Unplaced"/>
</dbReference>
<dbReference type="Proteomes" id="UP000694720">
    <property type="component" value="Unplaced"/>
</dbReference>
<dbReference type="Proteomes" id="UP000694722">
    <property type="component" value="Unplaced"/>
</dbReference>
<dbReference type="Proteomes" id="UP000694723">
    <property type="component" value="Unplaced"/>
</dbReference>
<dbReference type="Proteomes" id="UP000694724">
    <property type="component" value="Unplaced"/>
</dbReference>
<dbReference type="Proteomes" id="UP000694725">
    <property type="component" value="Unplaced"/>
</dbReference>
<dbReference type="Proteomes" id="UP000694726">
    <property type="component" value="Unplaced"/>
</dbReference>
<dbReference type="Proteomes" id="UP000694727">
    <property type="component" value="Unplaced"/>
</dbReference>
<dbReference type="Proteomes" id="UP000694728">
    <property type="component" value="Unplaced"/>
</dbReference>
<dbReference type="GO" id="GO:0015629">
    <property type="term" value="C:actin cytoskeleton"/>
    <property type="evidence" value="ECO:0000250"/>
    <property type="project" value="UniProtKB"/>
</dbReference>
<dbReference type="GO" id="GO:0005923">
    <property type="term" value="C:bicellular tight junction"/>
    <property type="evidence" value="ECO:0000250"/>
    <property type="project" value="UniProtKB"/>
</dbReference>
<dbReference type="GO" id="GO:0005737">
    <property type="term" value="C:cytoplasm"/>
    <property type="evidence" value="ECO:0000318"/>
    <property type="project" value="GO_Central"/>
</dbReference>
<dbReference type="GO" id="GO:1990904">
    <property type="term" value="C:ribonucleoprotein complex"/>
    <property type="evidence" value="ECO:0000250"/>
    <property type="project" value="UniProtKB"/>
</dbReference>
<dbReference type="GO" id="GO:0032587">
    <property type="term" value="C:ruffle membrane"/>
    <property type="evidence" value="ECO:0000250"/>
    <property type="project" value="UniProtKB"/>
</dbReference>
<dbReference type="GO" id="GO:0005524">
    <property type="term" value="F:ATP binding"/>
    <property type="evidence" value="ECO:0007669"/>
    <property type="project" value="UniProtKB-KW"/>
</dbReference>
<dbReference type="GO" id="GO:0016887">
    <property type="term" value="F:ATP hydrolysis activity"/>
    <property type="evidence" value="ECO:0000250"/>
    <property type="project" value="UniProtKB"/>
</dbReference>
<dbReference type="GO" id="GO:0003725">
    <property type="term" value="F:double-stranded RNA binding"/>
    <property type="evidence" value="ECO:0000250"/>
    <property type="project" value="UniProtKB"/>
</dbReference>
<dbReference type="GO" id="GO:0003724">
    <property type="term" value="F:RNA helicase activity"/>
    <property type="evidence" value="ECO:0000250"/>
    <property type="project" value="UniProtKB"/>
</dbReference>
<dbReference type="GO" id="GO:0003727">
    <property type="term" value="F:single-stranded RNA binding"/>
    <property type="evidence" value="ECO:0000250"/>
    <property type="project" value="UniProtKB"/>
</dbReference>
<dbReference type="GO" id="GO:0008270">
    <property type="term" value="F:zinc ion binding"/>
    <property type="evidence" value="ECO:0000250"/>
    <property type="project" value="UniProtKB"/>
</dbReference>
<dbReference type="GO" id="GO:0140374">
    <property type="term" value="P:antiviral innate immune response"/>
    <property type="evidence" value="ECO:0000250"/>
    <property type="project" value="UniProtKB"/>
</dbReference>
<dbReference type="GO" id="GO:0071360">
    <property type="term" value="P:cellular response to exogenous dsRNA"/>
    <property type="evidence" value="ECO:0000250"/>
    <property type="project" value="UniProtKB"/>
</dbReference>
<dbReference type="GO" id="GO:0002753">
    <property type="term" value="P:cytoplasmic pattern recognition receptor signaling pathway"/>
    <property type="evidence" value="ECO:0000318"/>
    <property type="project" value="GO_Central"/>
</dbReference>
<dbReference type="GO" id="GO:0045087">
    <property type="term" value="P:innate immune response"/>
    <property type="evidence" value="ECO:0000250"/>
    <property type="project" value="UniProtKB"/>
</dbReference>
<dbReference type="GO" id="GO:0002230">
    <property type="term" value="P:positive regulation of defense response to virus by host"/>
    <property type="evidence" value="ECO:0000250"/>
    <property type="project" value="UniProtKB"/>
</dbReference>
<dbReference type="GO" id="GO:0032727">
    <property type="term" value="P:positive regulation of interferon-alpha production"/>
    <property type="evidence" value="ECO:0000250"/>
    <property type="project" value="UniProtKB"/>
</dbReference>
<dbReference type="GO" id="GO:0032728">
    <property type="term" value="P:positive regulation of interferon-beta production"/>
    <property type="evidence" value="ECO:0000250"/>
    <property type="project" value="UniProtKB"/>
</dbReference>
<dbReference type="GO" id="GO:0032755">
    <property type="term" value="P:positive regulation of interleukin-6 production"/>
    <property type="evidence" value="ECO:0000250"/>
    <property type="project" value="UniProtKB"/>
</dbReference>
<dbReference type="GO" id="GO:0002735">
    <property type="term" value="P:positive regulation of myeloid dendritic cell cytokine production"/>
    <property type="evidence" value="ECO:0000250"/>
    <property type="project" value="UniProtKB"/>
</dbReference>
<dbReference type="GO" id="GO:0060760">
    <property type="term" value="P:positive regulation of response to cytokine stimulus"/>
    <property type="evidence" value="ECO:0000250"/>
    <property type="project" value="UniProtKB"/>
</dbReference>
<dbReference type="GO" id="GO:0032760">
    <property type="term" value="P:positive regulation of tumor necrosis factor production"/>
    <property type="evidence" value="ECO:0000250"/>
    <property type="project" value="UniProtKB"/>
</dbReference>
<dbReference type="GO" id="GO:0030334">
    <property type="term" value="P:regulation of cell migration"/>
    <property type="evidence" value="ECO:0000250"/>
    <property type="project" value="UniProtKB"/>
</dbReference>
<dbReference type="GO" id="GO:0043330">
    <property type="term" value="P:response to exogenous dsRNA"/>
    <property type="evidence" value="ECO:0000250"/>
    <property type="project" value="UniProtKB"/>
</dbReference>
<dbReference type="GO" id="GO:0039529">
    <property type="term" value="P:RIG-I signaling pathway"/>
    <property type="evidence" value="ECO:0000250"/>
    <property type="project" value="UniProtKB"/>
</dbReference>
<dbReference type="CDD" id="cd08817">
    <property type="entry name" value="CARD_RIG-I_r2"/>
    <property type="match status" value="1"/>
</dbReference>
<dbReference type="CDD" id="cd18073">
    <property type="entry name" value="DEXHc_RIG-I_DDX58"/>
    <property type="match status" value="1"/>
</dbReference>
<dbReference type="CDD" id="cd12090">
    <property type="entry name" value="MDA5_ID"/>
    <property type="match status" value="1"/>
</dbReference>
<dbReference type="CDD" id="cd18802">
    <property type="entry name" value="SF2_C_dicer"/>
    <property type="match status" value="1"/>
</dbReference>
<dbReference type="FunFam" id="1.10.533.10:FF:000072">
    <property type="entry name" value="Probable ATP-dependent RNA helicase DDX58"/>
    <property type="match status" value="1"/>
</dbReference>
<dbReference type="FunFam" id="1.10.533.10:FF:000078">
    <property type="entry name" value="Probable ATP-dependent RNA helicase DDX58"/>
    <property type="match status" value="1"/>
</dbReference>
<dbReference type="FunFam" id="1.20.1320.30:FF:000002">
    <property type="entry name" value="Probable ATP-dependent RNA helicase DDX58"/>
    <property type="match status" value="1"/>
</dbReference>
<dbReference type="FunFam" id="2.170.150.30:FF:000001">
    <property type="entry name" value="Probable ATP-dependent RNA helicase DDX58"/>
    <property type="match status" value="1"/>
</dbReference>
<dbReference type="FunFam" id="3.40.50.300:FF:001233">
    <property type="entry name" value="Probable ATP-dependent RNA helicase DDX58"/>
    <property type="match status" value="1"/>
</dbReference>
<dbReference type="FunFam" id="3.40.50.300:FF:001291">
    <property type="entry name" value="Probable ATP-dependent RNA helicase DDX58"/>
    <property type="match status" value="1"/>
</dbReference>
<dbReference type="Gene3D" id="1.20.1320.30">
    <property type="match status" value="1"/>
</dbReference>
<dbReference type="Gene3D" id="1.10.533.10">
    <property type="entry name" value="Death Domain, Fas"/>
    <property type="match status" value="2"/>
</dbReference>
<dbReference type="Gene3D" id="3.40.50.300">
    <property type="entry name" value="P-loop containing nucleotide triphosphate hydrolases"/>
    <property type="match status" value="2"/>
</dbReference>
<dbReference type="Gene3D" id="2.170.150.30">
    <property type="entry name" value="RIG-I-like receptor, C-terminal regulatory domain"/>
    <property type="match status" value="1"/>
</dbReference>
<dbReference type="InterPro" id="IPR031964">
    <property type="entry name" value="CARD_dom"/>
</dbReference>
<dbReference type="InterPro" id="IPR042145">
    <property type="entry name" value="CARD_RIG-I_r2"/>
</dbReference>
<dbReference type="InterPro" id="IPR011545">
    <property type="entry name" value="DEAD/DEAH_box_helicase_dom"/>
</dbReference>
<dbReference type="InterPro" id="IPR011029">
    <property type="entry name" value="DEATH-like_dom_sf"/>
</dbReference>
<dbReference type="InterPro" id="IPR014001">
    <property type="entry name" value="Helicase_ATP-bd"/>
</dbReference>
<dbReference type="InterPro" id="IPR001650">
    <property type="entry name" value="Helicase_C-like"/>
</dbReference>
<dbReference type="InterPro" id="IPR027417">
    <property type="entry name" value="P-loop_NTPase"/>
</dbReference>
<dbReference type="InterPro" id="IPR041204">
    <property type="entry name" value="RIG-I-like_C"/>
</dbReference>
<dbReference type="InterPro" id="IPR038557">
    <property type="entry name" value="RLR_C_sf"/>
</dbReference>
<dbReference type="InterPro" id="IPR021673">
    <property type="entry name" value="RLR_CTR"/>
</dbReference>
<dbReference type="InterPro" id="IPR051363">
    <property type="entry name" value="RLR_Helicase"/>
</dbReference>
<dbReference type="PANTHER" id="PTHR14074:SF16">
    <property type="entry name" value="ANTIVIRAL INNATE IMMUNE RESPONSE RECEPTOR RIG-I"/>
    <property type="match status" value="1"/>
</dbReference>
<dbReference type="PANTHER" id="PTHR14074">
    <property type="entry name" value="HELICASE WITH DEATH DOMAIN-RELATED"/>
    <property type="match status" value="1"/>
</dbReference>
<dbReference type="Pfam" id="PF16739">
    <property type="entry name" value="CARD_2"/>
    <property type="match status" value="2"/>
</dbReference>
<dbReference type="Pfam" id="PF00270">
    <property type="entry name" value="DEAD"/>
    <property type="match status" value="1"/>
</dbReference>
<dbReference type="Pfam" id="PF00271">
    <property type="entry name" value="Helicase_C"/>
    <property type="match status" value="1"/>
</dbReference>
<dbReference type="Pfam" id="PF18119">
    <property type="entry name" value="RIG-I_C"/>
    <property type="match status" value="1"/>
</dbReference>
<dbReference type="Pfam" id="PF11648">
    <property type="entry name" value="RIG-I_C-RD"/>
    <property type="match status" value="1"/>
</dbReference>
<dbReference type="SMART" id="SM00487">
    <property type="entry name" value="DEXDc"/>
    <property type="match status" value="1"/>
</dbReference>
<dbReference type="SMART" id="SM00490">
    <property type="entry name" value="HELICc"/>
    <property type="match status" value="1"/>
</dbReference>
<dbReference type="SUPFAM" id="SSF52540">
    <property type="entry name" value="P-loop containing nucleoside triphosphate hydrolases"/>
    <property type="match status" value="2"/>
</dbReference>
<dbReference type="PROSITE" id="PS51192">
    <property type="entry name" value="HELICASE_ATP_BIND_1"/>
    <property type="match status" value="1"/>
</dbReference>
<dbReference type="PROSITE" id="PS51194">
    <property type="entry name" value="HELICASE_CTER"/>
    <property type="match status" value="1"/>
</dbReference>
<dbReference type="PROSITE" id="PS51789">
    <property type="entry name" value="RLR_CTR"/>
    <property type="match status" value="1"/>
</dbReference>
<reference key="1">
    <citation type="journal article" date="2000" name="Microb. Pathog.">
        <title>An RNA helicase, RHIV -1, induced by porcine reproductive and respiratory syndrome virus (PRRSV) is mapped on porcine chromosome 10q13.</title>
        <authorList>
            <person name="Zhang X."/>
            <person name="Wang C."/>
            <person name="Schook L.B."/>
            <person name="Hawken R.J."/>
            <person name="Rutherford M.S."/>
        </authorList>
    </citation>
    <scope>NUCLEOTIDE SEQUENCE [MRNA]</scope>
    <scope>TISSUE SPECIFICITY</scope>
    <source>
        <tissue>Peripheral blood</tissue>
    </source>
</reference>
<comment type="function">
    <text evidence="2">Innate immune receptor that senses cytoplasmic viral nucleic acids and activates a downstream signaling cascade leading to the production of type I interferons and pro-inflammatory cytokines. Forms a ribonucleoprotein complex with viral RNAs on which it homooligomerizes to form filaments. The homooligomerization allows the recruitment of RNF135 an E3 ubiquitin-protein ligase that activates and amplifies the RIG-I-mediated antiviral signaling in an RNA length-dependent manner through ubiquitination-dependent and -independent mechanisms. Upon activation, associates with mitochondria antiviral signaling protein (MAVS/IPS1) that activates the IKK-related kinases TBK1 and IKBKE which in turn phosphorylate the interferon regulatory factors IRF3 and IRF7, activating transcription of antiviral immunological genes including the IFN-alpha and IFN-beta interferons. Ligands include: 5'-triphosphorylated ssRNA and dsRNA and short dsRNA (&lt;1 kb in length). In addition to the 5'-triphosphate moiety, blunt-end base pairing at the 5'-end of the RNA is very essential. Overhangs at the non-triphosphorylated end of the dsRNA RNA have no major impact on its activity. A 3'overhang at the 5'triphosphate end decreases and any 5'overhang at the 5' triphosphate end abolishes its activity. Detects both positive and negative strand RNA viruses including members of the families Paramyxoviridae, Rhabdoviridae: vesicular stomatitis virus (VSV) Orthomyxoviridae: influenza A and B virus, Flaviviridae: Japanese encephalitis virus (JEV). It also detects rotavirus and reovirus. Also involved in antiviral signaling in response to viruses containing a dsDNA genome. Detects dsRNA produced from non-self dsDNA by RNA polymerase III. May play important roles in granulocyte production and differentiation, bacterial phagocytosis and in the regulation of cell migration.</text>
</comment>
<comment type="catalytic activity">
    <reaction evidence="2">
        <text>ATP + H2O = ADP + phosphate + H(+)</text>
        <dbReference type="Rhea" id="RHEA:13065"/>
        <dbReference type="ChEBI" id="CHEBI:15377"/>
        <dbReference type="ChEBI" id="CHEBI:15378"/>
        <dbReference type="ChEBI" id="CHEBI:30616"/>
        <dbReference type="ChEBI" id="CHEBI:43474"/>
        <dbReference type="ChEBI" id="CHEBI:456216"/>
        <dbReference type="EC" id="3.6.4.13"/>
    </reaction>
    <physiologicalReaction direction="left-to-right" evidence="2">
        <dbReference type="Rhea" id="RHEA:13066"/>
    </physiologicalReaction>
</comment>
<comment type="subunit">
    <text evidence="2 3">Monomer; maintained as a monomer in an autoinhibited state. Upon binding of viral RNAs and conformational shift, homooligomerizes and forms filaments on these molecules. Interacts (via tandem CARD domain) with MAVS/IPS1 promoting its filamentation. Interacts with DHX58/LGP2, IKBKE, TBK1 and STING1. Interacts (via CARD domain) with TRIM25 (via SPRY domain). Interacts (double-stranded RNA-bound oligomeric form) with RNF135 (homodimer); involved in RNA length-dependent activation of the RIG-I signaling pathway. Interacts with CYLD. Interacts with NLRC5; blocks the interaction of MAVS/IPS1 to RIGI. Interacts with SRC. Interacts with DDX60. Interacts with ZC3HAV1 (via zinc-fingers) in an RNA-dependent manner. Interacts (via tandem CARD domain) with SEC14L1; the interaction is direct and impairs the interaction of RIGI with MAVS/IPS1. Interacts with VCP/p97; interaction is direct and allows the recruitment of RNF125 and subsequent ubiquitination and degradation. Interacts with NOP53; may regulate RIGI through USP15-mediated 'Lys-63'-linked deubiquitination. Interacts with SIGLEC10, CBL and PTPN11; within a negative feedback loop leading to RIGI degradation. Interacts with LRRC25. Interacts with ZCCHC3; leading to activation of RIGI. Interacts with RNF123. Interacts with UBE2D3 and UBE2N; E2 ubiquitin ligases involved in RNF135-mediated ubiquitination of RIGI and activation of the RIG-I signaling pathway. Interacts with IFIT3. Interacts with DDX3X. Interacts with RTN3 (By similarity). Interacts with ARL16; this interaction is GTP-dependent and induced upon viral infection; this interaction suppresses the RNA sensing activity of RIGI (By similarity). Interacts with DHX16; this interaction enhances RIGI-mediated antiviral response (By similarity). Interacts with IRGM; promoting RIGI degradation (By similarity). Interacts with IFI6; this interaction inhibits RIGI activation (By similarity). Interacts with ECSIT; this interaction bridges RIGI to the MAVS complex at the mitochondrion (By similarity). Interacts with YWHAE; this interaction drives RIGI at the mitochondrion.</text>
</comment>
<comment type="subcellular location">
    <subcellularLocation>
        <location evidence="1">Cytoplasm</location>
    </subcellularLocation>
    <subcellularLocation>
        <location evidence="1">Cell projection</location>
        <location evidence="1">Ruffle membrane</location>
    </subcellularLocation>
    <subcellularLocation>
        <location evidence="1">Cytoplasm</location>
        <location evidence="1">Cytoskeleton</location>
    </subcellularLocation>
    <subcellularLocation>
        <location evidence="1">Cell junction</location>
        <location evidence="1">Tight junction</location>
    </subcellularLocation>
    <text evidence="1">Colocalized with TRIM25 at cytoplasmic perinuclear bodies. Associated with the actin cytoskeleton at membrane ruffles.</text>
</comment>
<comment type="tissue specificity">
    <text evidence="7">Ubiquitously expressed, with highest levels in spleen, liver, intestine and heart. Up-regulated in tracheobronchial lymph node and tonsils during porcine reproductive and respiratory syndrome virus (PRRSV) infection.</text>
</comment>
<comment type="domain">
    <text evidence="2">The RLR CTR domain controls homooligomerization and interaction with MAVS/IPS1. In the absence of viral infection, the protein is maintained as a monomer in an autoinhibited state with the CARD domains masked through intramolecular interactions with the RLR CTR domain. Upon binding to viral RNA and ubiquitination by RNF135, a conformational change releases the autoinhibition promoting further homooligomerization, interaction of the CARD domains with the adapter protein MAVS/IPS1 and activation of the downstream RIG-I signaling pathway.</text>
</comment>
<comment type="domain">
    <text evidence="2">The helicase domain is responsible for dsRNA recognition.</text>
</comment>
<comment type="domain">
    <text evidence="2">The 2 CARD domains are responsible for interaction with and signaling through MAVS/IPS1 and for association with the actin cytoskeleton.</text>
</comment>
<comment type="domain">
    <text evidence="2">The second CARD domain is the primary site for 'Lys-63'-linked ubiquitination.</text>
</comment>
<comment type="PTM">
    <text evidence="2">Phosphorylated in resting cells and dephosphorylated in RNA virus-infected cells. Phosphorylation at Thr-773 results in inhibition of its activity while dephosphorylation at these sites results in its activation.</text>
</comment>
<comment type="PTM">
    <text evidence="2">ISGylated. Conjugated to ubiquitin-like protein ISG15 upon IFN-beta stimulation. ISGylation negatively regulates its function in antiviral signaling response.</text>
</comment>
<comment type="PTM">
    <text evidence="2">Sumoylated, probably by MUL1; inhibiting its polyubiquitination.</text>
</comment>
<comment type="PTM">
    <text evidence="2">Acetylated in response to RNA virus infection. Deacetylated by HDAC6 in the presence of viral mRNAs which is required for detection of viral RNA by RIGI.</text>
</comment>
<comment type="PTM">
    <text evidence="2 3">Ubiquitinated. 'Lys-63' ubiquitination by RNF135, which occurs after RNA-binding and homodimerization, releases the autoinhibition of the CARD domains by the RLR CTR domain, an essential step in the activation of the RIG-I signaling pathway. Also ubiquitinated by TRIM4. Also undergoes 'Lys-48' ubiquitination by RNF125 that leads to proteasomal degradation. 'Lys-48' ubiquitination follows viral infection and is enhanced by 'Lys-63'-linked ubiquitination of the CARD domains that promotes interaction with VCP/p97 and subsequent recruitment of RNF125 (By similarity). Within a negative feedback loop involving SIGLEC10 and PTPN11, 'Lys-48' ubiquitination at Lys-815 by CBL also elicits the proteasomal degradation of RIGI (By similarity). Deubiquitinated by CYLD, a protease that selectively cleaves 'Lys-63'-linked ubiquitin chains. Also probably deubiquitinated by USP17L2/USP17 that cleaves 'Lys-48'- and 'Lys-63'-linked ubiquitin chains and positively regulates the receptor (By similarity). Ubiquitinated by TRIM40 via 'Lys-48'-linked ubiquitination; leading to proteasomal degradation (By similarity). Deubiquitinated by USP27X that cleaves 'Lys-63'-linked ubiquitin chains and inhibits the innate immune receptor activity (By similarity). Deubiquitinated by USP3 that also cleaves 'Lys-63'-linked ubiquitin chains and inhibits the innate immune receptor activity (By similarity).</text>
</comment>
<comment type="PTM">
    <text evidence="2">Degraded via selective autophagy following interaction with IRGM. IRGM promotes RIGI recruitment to autophagosome membranes, promoting its SQSTM1/p62-dependent autophagic degradation.</text>
</comment>
<comment type="similarity">
    <text evidence="8">Belongs to the helicase family. RLR subfamily.</text>
</comment>
<feature type="chain" id="PRO_0000144095" description="Antiviral innate immune response receptor RIG-I">
    <location>
        <begin position="1"/>
        <end position="940"/>
    </location>
</feature>
<feature type="domain" description="CARD 1">
    <location>
        <begin position="1"/>
        <end position="87"/>
    </location>
</feature>
<feature type="domain" description="CARD 2">
    <location>
        <begin position="92"/>
        <end position="172"/>
    </location>
</feature>
<feature type="domain" description="Helicase ATP-binding" evidence="4">
    <location>
        <begin position="249"/>
        <end position="428"/>
    </location>
</feature>
<feature type="domain" description="Helicase C-terminal" evidence="5">
    <location>
        <begin position="613"/>
        <end position="779"/>
    </location>
</feature>
<feature type="domain" description="RLR CTR" evidence="6">
    <location>
        <begin position="795"/>
        <end position="928"/>
    </location>
</feature>
<feature type="region of interest" description="Interaction with ZC3HAV1" evidence="1">
    <location>
        <begin position="219"/>
        <end position="928"/>
    </location>
</feature>
<feature type="region of interest" description="Mediates interaction with RNF135" evidence="2">
    <location>
        <begin position="738"/>
        <end position="928"/>
    </location>
</feature>
<feature type="short sequence motif" description="DECH box">
    <location>
        <begin position="370"/>
        <end position="373"/>
    </location>
</feature>
<feature type="binding site" evidence="4">
    <location>
        <begin position="262"/>
        <end position="269"/>
    </location>
    <ligand>
        <name>ATP</name>
        <dbReference type="ChEBI" id="CHEBI:30616"/>
    </ligand>
</feature>
<feature type="binding site" evidence="6">
    <location>
        <position position="813"/>
    </location>
    <ligand>
        <name>Zn(2+)</name>
        <dbReference type="ChEBI" id="CHEBI:29105"/>
    </ligand>
</feature>
<feature type="binding site" evidence="6">
    <location>
        <position position="816"/>
    </location>
    <ligand>
        <name>Zn(2+)</name>
        <dbReference type="ChEBI" id="CHEBI:29105"/>
    </ligand>
</feature>
<feature type="binding site" evidence="6">
    <location>
        <position position="867"/>
    </location>
    <ligand>
        <name>Zn(2+)</name>
        <dbReference type="ChEBI" id="CHEBI:29105"/>
    </ligand>
</feature>
<feature type="binding site" evidence="6">
    <location>
        <position position="872"/>
    </location>
    <ligand>
        <name>Zn(2+)</name>
        <dbReference type="ChEBI" id="CHEBI:29105"/>
    </ligand>
</feature>
<feature type="modified residue" description="Phosphothreonine; by CK2" evidence="2">
    <location>
        <position position="773"/>
    </location>
</feature>
<feature type="modified residue" description="N6-acetyllysine" evidence="2">
    <location>
        <position position="861"/>
    </location>
</feature>
<feature type="modified residue" description="N6-acetyllysine" evidence="2">
    <location>
        <position position="912"/>
    </location>
</feature>
<feature type="cross-link" description="Glycyl lysine isopeptide (Lys-Gly) (interchain with G-Cter in ubiquitin)" evidence="2">
    <location>
        <position position="48"/>
    </location>
</feature>
<feature type="cross-link" description="Glycyl lysine isopeptide (Lys-Gly) (interchain with G-Cter in ubiquitin)" evidence="2">
    <location>
        <position position="96"/>
    </location>
</feature>
<feature type="cross-link" description="Glycyl lysine isopeptide (Lys-Gly) (interchain with G-Cter in ubiquitin)" evidence="2">
    <location>
        <position position="154"/>
    </location>
</feature>
<feature type="cross-link" description="Glycyl lysine isopeptide (Lys-Gly) (interchain with G-Cter in ubiquitin)" evidence="2">
    <location>
        <position position="164"/>
    </location>
</feature>
<feature type="cross-link" description="Glycyl lysine isopeptide (Lys-Gly) (interchain with G-Cter in ubiquitin)" evidence="2">
    <location>
        <position position="172"/>
    </location>
</feature>
<feature type="cross-link" description="Glycyl lysine isopeptide (Lys-Gly) (interchain with G-Cter in ubiquitin)" evidence="2">
    <location>
        <position position="190"/>
    </location>
</feature>
<feature type="cross-link" description="Glycyl lysine isopeptide (Lys-Gly) (interchain with G-Cter in ubiquitin)" evidence="3">
    <location>
        <position position="815"/>
    </location>
</feature>